<gene>
    <name evidence="5" type="primary">yanG</name>
    <name type="ORF">ASPNIDRAFT_44964</name>
</gene>
<name>YANG_ASPNA</name>
<organism>
    <name type="scientific">Aspergillus niger (strain ATCC 1015 / CBS 113.46 / FGSC A1144 / LSHB Ac4 / NCTC 3858a / NRRL 328 / USDA 3528.7)</name>
    <dbReference type="NCBI Taxonomy" id="380704"/>
    <lineage>
        <taxon>Eukaryota</taxon>
        <taxon>Fungi</taxon>
        <taxon>Dikarya</taxon>
        <taxon>Ascomycota</taxon>
        <taxon>Pezizomycotina</taxon>
        <taxon>Eurotiomycetes</taxon>
        <taxon>Eurotiomycetidae</taxon>
        <taxon>Eurotiales</taxon>
        <taxon>Aspergillaceae</taxon>
        <taxon>Aspergillus</taxon>
        <taxon>Aspergillus subgen. Circumdati</taxon>
    </lineage>
</organism>
<accession>G3Y418</accession>
<comment type="function">
    <text evidence="4">Polyprenyl transferase; part of the gene cluster that mediates the biosynthesis of yanuthone D, a fungal isoprenoid epoxycyclohexenone that acts as an antibiotic against fungi and bacteria (PubMed:24684908). The first step of the pathway is the synthesis of 6-methylsalicylic acid (6-MSA) by the polyketide synthase yanA (PubMed:24684908). 6-MSA is then converted to m-cresol by the decarboxylase yanB (PubMed:24684908). The cytochrome P450 monooxygenase yanC then catalyzes the oxidation of m-cresol to toluquinol (PubMed:24684908). Epoxidation of toluquinol is then performed by the short chain dehydrogenase yanD, with the help of yanE, and a further prenylation by yanG leads to 7-deacetoxyyanuthone A (PubMed:24684908). The next step is the hydroxylation of C-22 of 7-deacetoxyyanuthone A by the cytochrome P450 monooxygenase yanH to yield 22-deacetylyanuthone A (PubMed:24684908). O-Mevalon transferase yanI then attaches mevalon to the hydroxyl group of 22-deacetylyanuthone A to produce yanuthone E (PubMed:24684908). Finally, the FAD-dependent monooxygenase yanF oxidizes the hydroxyl group at C15 of yanuthone E to form yanuthone D (PubMed:24684908). Furthermore, several branching points in the pathway lead to the production of yanuthones F and G from 7-deacetoxyyanuthone A; yanuthones H and I from 22-deacetylyanuthone A; and yanuthone J from yanuthone E (PubMed:24684908). YanG is also involved in the synthesis of yanuthone X1 which does not have 6-methylsalicylic acid (6-MSA) as precursor (PubMed:24684908).</text>
</comment>
<comment type="cofactor">
    <cofactor evidence="1">
        <name>Mg(2+)</name>
        <dbReference type="ChEBI" id="CHEBI:18420"/>
    </cofactor>
</comment>
<comment type="pathway">
    <text evidence="4">Secondary metabolite biosynthesis; terpenoid biosynthesis.</text>
</comment>
<comment type="subcellular location">
    <subcellularLocation>
        <location evidence="2">Membrane</location>
        <topology evidence="2">Multi-pass membrane protein</topology>
    </subcellularLocation>
</comment>
<comment type="disruption phenotype">
    <text evidence="4">Loses the ability to produce yanuthone D (PubMed:24684908). Also leads to the loss of production of yanuthone X1 which does not have 6-methylsalicylic acid (6-MSA) as a precursor (PubMed:24684908).</text>
</comment>
<comment type="biotechnology">
    <text evidence="3">Yanuthone D is an antibiotic against C.albicans, methicillin-resistant S.aureus (MRSA), and vancomycin-resistant Enterococcus (PubMed:11031048).</text>
</comment>
<comment type="similarity">
    <text evidence="6">Belongs to the UbiA prenyltransferase family.</text>
</comment>
<keyword id="KW-0460">Magnesium</keyword>
<keyword id="KW-0472">Membrane</keyword>
<keyword id="KW-0808">Transferase</keyword>
<keyword id="KW-0812">Transmembrane</keyword>
<keyword id="KW-1133">Transmembrane helix</keyword>
<protein>
    <recommendedName>
        <fullName evidence="5">Polyprenyl transferase yanG</fullName>
        <ecNumber evidence="7">2.5.1.-</ecNumber>
    </recommendedName>
    <alternativeName>
        <fullName evidence="5">Yanuthone D biosynthesis cluster protein G</fullName>
    </alternativeName>
</protein>
<evidence type="ECO:0000250" key="1">
    <source>
        <dbReference type="UniProtKB" id="P32378"/>
    </source>
</evidence>
<evidence type="ECO:0000255" key="2"/>
<evidence type="ECO:0000269" key="3">
    <source>
    </source>
</evidence>
<evidence type="ECO:0000269" key="4">
    <source>
    </source>
</evidence>
<evidence type="ECO:0000303" key="5">
    <source>
    </source>
</evidence>
<evidence type="ECO:0000305" key="6"/>
<evidence type="ECO:0000305" key="7">
    <source>
    </source>
</evidence>
<sequence>MSTTKRSVTTRPSTSSRNVPRGIWELARLHTRESWLCWYPSIWGACVAAGVSDTVLEPLAFARFLFGIWASVTATHCAFCTFKSVPFCFFVVPRYSSDYWHLDKHVQRCKVRPLPSGMISTPEALLAFVCWVPFTFAITWATLGPAVTVSFIPVWVLSVIYPFMKRLMPFPQVVLGAIIGGAVFPGWVGVTGDLDHLDQALPLFFATAAWVVYFDVFYATQDLPDDKKAGVKSLAVWMGPNVKILLAGLGILQIAFFAMTALRADLSLIFWILGIGVWAVSVPWHVLSLNLKDRHSGGSVFKANIKLGLYMTGVSLLELVLLRVHHAPMKVY</sequence>
<dbReference type="EC" id="2.5.1.-" evidence="7"/>
<dbReference type="EMBL" id="ACJE01000012">
    <property type="protein sequence ID" value="EHA22195.1"/>
    <property type="molecule type" value="Genomic_DNA"/>
</dbReference>
<dbReference type="SMR" id="G3Y418"/>
<dbReference type="STRING" id="380704.G3Y418"/>
<dbReference type="HOGENOM" id="CLU_034879_3_2_1"/>
<dbReference type="OrthoDB" id="59409at5052"/>
<dbReference type="UniPathway" id="UPA00213"/>
<dbReference type="Proteomes" id="UP000009038">
    <property type="component" value="Unassembled WGS sequence"/>
</dbReference>
<dbReference type="GO" id="GO:0005886">
    <property type="term" value="C:plasma membrane"/>
    <property type="evidence" value="ECO:0007669"/>
    <property type="project" value="TreeGrafter"/>
</dbReference>
<dbReference type="GO" id="GO:0016765">
    <property type="term" value="F:transferase activity, transferring alkyl or aryl (other than methyl) groups"/>
    <property type="evidence" value="ECO:0007669"/>
    <property type="project" value="InterPro"/>
</dbReference>
<dbReference type="GO" id="GO:0016114">
    <property type="term" value="P:terpenoid biosynthetic process"/>
    <property type="evidence" value="ECO:0007669"/>
    <property type="project" value="UniProtKB-UniPathway"/>
</dbReference>
<dbReference type="CDD" id="cd13959">
    <property type="entry name" value="PT_UbiA_COQ2"/>
    <property type="match status" value="1"/>
</dbReference>
<dbReference type="FunFam" id="1.20.120.1780:FF:000001">
    <property type="entry name" value="4-hydroxybenzoate octaprenyltransferase"/>
    <property type="match status" value="1"/>
</dbReference>
<dbReference type="Gene3D" id="1.10.357.140">
    <property type="entry name" value="UbiA prenyltransferase"/>
    <property type="match status" value="1"/>
</dbReference>
<dbReference type="Gene3D" id="1.20.120.1780">
    <property type="entry name" value="UbiA prenyltransferase"/>
    <property type="match status" value="1"/>
</dbReference>
<dbReference type="InterPro" id="IPR039653">
    <property type="entry name" value="Prenyltransferase"/>
</dbReference>
<dbReference type="InterPro" id="IPR000537">
    <property type="entry name" value="UbiA_prenyltransferase"/>
</dbReference>
<dbReference type="InterPro" id="IPR044878">
    <property type="entry name" value="UbiA_sf"/>
</dbReference>
<dbReference type="PANTHER" id="PTHR11048:SF28">
    <property type="entry name" value="4-HYDROXYBENZOATE POLYPRENYLTRANSFERASE, MITOCHONDRIAL"/>
    <property type="match status" value="1"/>
</dbReference>
<dbReference type="PANTHER" id="PTHR11048">
    <property type="entry name" value="PRENYLTRANSFERASES"/>
    <property type="match status" value="1"/>
</dbReference>
<dbReference type="Pfam" id="PF01040">
    <property type="entry name" value="UbiA"/>
    <property type="match status" value="1"/>
</dbReference>
<proteinExistence type="evidence at protein level"/>
<reference key="1">
    <citation type="journal article" date="2011" name="Genome Res.">
        <title>Comparative genomics of citric-acid-producing Aspergillus niger ATCC 1015 versus enzyme-producing CBS 513.88.</title>
        <authorList>
            <person name="Andersen M.R."/>
            <person name="Salazar M.P."/>
            <person name="Schaap P.J."/>
            <person name="van de Vondervoort P.J.I."/>
            <person name="Culley D."/>
            <person name="Thykaer J."/>
            <person name="Frisvad J.C."/>
            <person name="Nielsen K.F."/>
            <person name="Albang R."/>
            <person name="Albermann K."/>
            <person name="Berka R.M."/>
            <person name="Braus G.H."/>
            <person name="Braus-Stromeyer S.A."/>
            <person name="Corrochano L.M."/>
            <person name="Dai Z."/>
            <person name="van Dijck P.W.M."/>
            <person name="Hofmann G."/>
            <person name="Lasure L.L."/>
            <person name="Magnuson J.K."/>
            <person name="Menke H."/>
            <person name="Meijer M."/>
            <person name="Meijer S.L."/>
            <person name="Nielsen J.B."/>
            <person name="Nielsen M.L."/>
            <person name="van Ooyen A.J.J."/>
            <person name="Pel H.J."/>
            <person name="Poulsen L."/>
            <person name="Samson R.A."/>
            <person name="Stam H."/>
            <person name="Tsang A."/>
            <person name="van den Brink J.M."/>
            <person name="Atkins A."/>
            <person name="Aerts A."/>
            <person name="Shapiro H."/>
            <person name="Pangilinan J."/>
            <person name="Salamov A."/>
            <person name="Lou Y."/>
            <person name="Lindquist E."/>
            <person name="Lucas S."/>
            <person name="Grimwood J."/>
            <person name="Grigoriev I.V."/>
            <person name="Kubicek C.P."/>
            <person name="Martinez D."/>
            <person name="van Peij N.N.M.E."/>
            <person name="Roubos J.A."/>
            <person name="Nielsen J."/>
            <person name="Baker S.E."/>
        </authorList>
    </citation>
    <scope>NUCLEOTIDE SEQUENCE [LARGE SCALE GENOMIC DNA]</scope>
    <source>
        <strain>ATCC 1015 / CBS 113.46 / FGSC A1144 / LSHB Ac4 / NCTC 3858a / NRRL 328 / USDA 3528.7</strain>
    </source>
</reference>
<reference key="2">
    <citation type="journal article" date="2000" name="J. Org. Chem.">
        <title>Yanuthones: novel metabolites from a marine isolate of Aspergillus niger.</title>
        <authorList>
            <person name="Bugni T.S."/>
            <person name="Abbanat D."/>
            <person name="Bernan V.S."/>
            <person name="Maiese W.M."/>
            <person name="Greenstein M."/>
            <person name="Van Wagoner R.M."/>
            <person name="Ireland C.M."/>
        </authorList>
    </citation>
    <scope>BIOTECHNOLOGY</scope>
</reference>
<reference key="3">
    <citation type="journal article" date="2014" name="Chem. Biol.">
        <title>Molecular and chemical characterization of the biosynthesis of the 6-MSA-derived meroterpenoid yanuthone D in Aspergillus niger.</title>
        <authorList>
            <person name="Holm D.K."/>
            <person name="Petersen L.M."/>
            <person name="Klitgaard A."/>
            <person name="Knudsen P.B."/>
            <person name="Jarczynska Z.D."/>
            <person name="Nielsen K.F."/>
            <person name="Gotfredsen C.H."/>
            <person name="Larsen T.O."/>
            <person name="Mortensen U.H."/>
        </authorList>
    </citation>
    <scope>FUNCTION</scope>
    <scope>DISRUPTION PHENOTYPE</scope>
</reference>
<feature type="chain" id="PRO_0000436766" description="Polyprenyl transferase yanG">
    <location>
        <begin position="1"/>
        <end position="332"/>
    </location>
</feature>
<feature type="transmembrane region" description="Helical" evidence="2">
    <location>
        <begin position="42"/>
        <end position="62"/>
    </location>
</feature>
<feature type="transmembrane region" description="Helical" evidence="2">
    <location>
        <begin position="72"/>
        <end position="92"/>
    </location>
</feature>
<feature type="transmembrane region" description="Helical" evidence="2">
    <location>
        <begin position="145"/>
        <end position="165"/>
    </location>
</feature>
<feature type="transmembrane region" description="Helical" evidence="2">
    <location>
        <begin position="170"/>
        <end position="190"/>
    </location>
</feature>
<feature type="transmembrane region" description="Helical" evidence="2">
    <location>
        <begin position="200"/>
        <end position="220"/>
    </location>
</feature>
<feature type="transmembrane region" description="Helical" evidence="2">
    <location>
        <begin position="242"/>
        <end position="262"/>
    </location>
</feature>
<feature type="transmembrane region" description="Helical" evidence="2">
    <location>
        <begin position="266"/>
        <end position="286"/>
    </location>
</feature>
<feature type="transmembrane region" description="Helical" evidence="2">
    <location>
        <begin position="300"/>
        <end position="320"/>
    </location>
</feature>